<reference key="1">
    <citation type="journal article" date="2004" name="Science">
        <title>The 1.2-megabase genome sequence of Mimivirus.</title>
        <authorList>
            <person name="Raoult D."/>
            <person name="Audic S."/>
            <person name="Robert C."/>
            <person name="Abergel C."/>
            <person name="Renesto P."/>
            <person name="Ogata H."/>
            <person name="La Scola B."/>
            <person name="Susan M."/>
            <person name="Claverie J.-M."/>
        </authorList>
    </citation>
    <scope>NUCLEOTIDE SEQUENCE [LARGE SCALE GENOMIC DNA]</scope>
    <source>
        <strain>Rowbotham-Bradford</strain>
    </source>
</reference>
<reference key="2">
    <citation type="journal article" date="2006" name="J. Virol.">
        <title>Mimivirus giant particles incorporate a large fraction of anonymous and unique gene products.</title>
        <authorList>
            <person name="Renesto P."/>
            <person name="Abergel C."/>
            <person name="Decloquement P."/>
            <person name="Moinier D."/>
            <person name="Azza S."/>
            <person name="Ogata H."/>
            <person name="Fourquet P."/>
            <person name="Gorvel J.-P."/>
            <person name="Claverie J.-M."/>
            <person name="Raoult D."/>
        </authorList>
    </citation>
    <scope>IDENTIFICATION BY MASS SPECTROMETRY [LARGE SCALE ANALYSIS]</scope>
    <scope>SUBCELLULAR LOCATION</scope>
</reference>
<comment type="subcellular location">
    <subcellularLocation>
        <location evidence="1">Virion</location>
    </subcellularLocation>
</comment>
<protein>
    <recommendedName>
        <fullName>Uncharacterized protein R188</fullName>
    </recommendedName>
</protein>
<evidence type="ECO:0000269" key="1">
    <source>
    </source>
</evidence>
<name>YR188_MIMIV</name>
<feature type="chain" id="PRO_0000253263" description="Uncharacterized protein R188">
    <location>
        <begin position="1"/>
        <end position="509"/>
    </location>
</feature>
<accession>Q5URB2</accession>
<sequence length="509" mass="57006">MRSSFSKCKVNTCNPSNCLEVDILIVGGGASGIYSAWRLSQTYPNKKVLVIEEKSYLGGRLESVYFGNEKIYAEVGGMRTFPSIDLYVTAVIKKLKLQSIPVPYIEPDNIAYVKNTRLTVEATSIGPSSNPEKQKLIQLYKIPPDEQNISTNDIIYAAAVRAAPTFPEDWRTVYDYPELNNETFSEMFSEQGVSANTQQVFEVFSGYSFFISQRLAASTGIRENISISGENNQHFVVGGYSSIVFGMTDETFCNPNYQLFLNTSIKKITPSNSPNGLHTSILVDTLTGLPITIKSESIILSVPKDSLNRIVAPITPNTIETMNSLTDWRAFKAFLLVDQTTYQLISMNGHMKGRGISDLPARQVWAYSGNPPCVLIYCDNAYADFWKKYINDEINNCFPKFHDPCINKPLVSELKRQIGIIYSVDPSKIVVNKILYKYWYAGAYFSKPSDIPKLFEEVRTPLGPEYSVYLVGSDISVSQGWVDGALNTADNLLVKYYGVTSILDENRLY</sequence>
<organism>
    <name type="scientific">Acanthamoeba polyphaga mimivirus</name>
    <name type="common">APMV</name>
    <dbReference type="NCBI Taxonomy" id="212035"/>
    <lineage>
        <taxon>Viruses</taxon>
        <taxon>Varidnaviria</taxon>
        <taxon>Bamfordvirae</taxon>
        <taxon>Nucleocytoviricota</taxon>
        <taxon>Megaviricetes</taxon>
        <taxon>Imitervirales</taxon>
        <taxon>Mimiviridae</taxon>
        <taxon>Megamimivirinae</taxon>
        <taxon>Mimivirus</taxon>
        <taxon>Mimivirus bradfordmassiliense</taxon>
    </lineage>
</organism>
<dbReference type="EMBL" id="AY653733">
    <property type="protein sequence ID" value="AAV50462.1"/>
    <property type="molecule type" value="Genomic_DNA"/>
</dbReference>
<dbReference type="SMR" id="Q5URB2"/>
<dbReference type="KEGG" id="vg:9924793"/>
<dbReference type="OrthoDB" id="6817at10239"/>
<dbReference type="Proteomes" id="UP000001134">
    <property type="component" value="Genome"/>
</dbReference>
<dbReference type="GO" id="GO:0044423">
    <property type="term" value="C:virion component"/>
    <property type="evidence" value="ECO:0007669"/>
    <property type="project" value="UniProtKB-KW"/>
</dbReference>
<dbReference type="GO" id="GO:0016491">
    <property type="term" value="F:oxidoreductase activity"/>
    <property type="evidence" value="ECO:0007669"/>
    <property type="project" value="InterPro"/>
</dbReference>
<dbReference type="Gene3D" id="3.50.50.60">
    <property type="entry name" value="FAD/NAD(P)-binding domain"/>
    <property type="match status" value="1"/>
</dbReference>
<dbReference type="InterPro" id="IPR002937">
    <property type="entry name" value="Amino_oxidase"/>
</dbReference>
<dbReference type="InterPro" id="IPR036188">
    <property type="entry name" value="FAD/NAD-bd_sf"/>
</dbReference>
<dbReference type="Pfam" id="PF01593">
    <property type="entry name" value="Amino_oxidase"/>
    <property type="match status" value="1"/>
</dbReference>
<dbReference type="SUPFAM" id="SSF51905">
    <property type="entry name" value="FAD/NAD(P)-binding domain"/>
    <property type="match status" value="1"/>
</dbReference>
<keyword id="KW-1185">Reference proteome</keyword>
<keyword id="KW-0946">Virion</keyword>
<gene>
    <name type="ordered locus">MIMI_R188</name>
</gene>
<organismHost>
    <name type="scientific">Acanthamoeba polyphaga</name>
    <name type="common">Amoeba</name>
    <dbReference type="NCBI Taxonomy" id="5757"/>
</organismHost>
<proteinExistence type="evidence at protein level"/>